<dbReference type="EC" id="2.1.1.216" evidence="1"/>
<dbReference type="EMBL" id="AE008384">
    <property type="protein sequence ID" value="AAM32224.1"/>
    <property type="molecule type" value="Genomic_DNA"/>
</dbReference>
<dbReference type="RefSeq" id="WP_011034445.1">
    <property type="nucleotide sequence ID" value="NC_003901.1"/>
</dbReference>
<dbReference type="SMR" id="Q8PU28"/>
<dbReference type="KEGG" id="mma:MM_2528"/>
<dbReference type="PATRIC" id="fig|192952.21.peg.2897"/>
<dbReference type="eggNOG" id="arCOG01219">
    <property type="taxonomic scope" value="Archaea"/>
</dbReference>
<dbReference type="HOGENOM" id="CLU_010862_5_1_2"/>
<dbReference type="Proteomes" id="UP000000595">
    <property type="component" value="Chromosome"/>
</dbReference>
<dbReference type="GO" id="GO:0160104">
    <property type="term" value="F:tRNA (guanine(26)-N2)-dimethyltransferase activity"/>
    <property type="evidence" value="ECO:0007669"/>
    <property type="project" value="UniProtKB-UniRule"/>
</dbReference>
<dbReference type="GO" id="GO:0000049">
    <property type="term" value="F:tRNA binding"/>
    <property type="evidence" value="ECO:0007669"/>
    <property type="project" value="UniProtKB-KW"/>
</dbReference>
<dbReference type="GO" id="GO:0002940">
    <property type="term" value="P:tRNA N2-guanine methylation"/>
    <property type="evidence" value="ECO:0007669"/>
    <property type="project" value="TreeGrafter"/>
</dbReference>
<dbReference type="CDD" id="cd02440">
    <property type="entry name" value="AdoMet_MTases"/>
    <property type="match status" value="1"/>
</dbReference>
<dbReference type="Gene3D" id="3.30.56.70">
    <property type="entry name" value="N2,N2-dimethylguanosine tRNA methyltransferase, C-terminal domain"/>
    <property type="match status" value="1"/>
</dbReference>
<dbReference type="Gene3D" id="3.40.50.150">
    <property type="entry name" value="Vaccinia Virus protein VP39"/>
    <property type="match status" value="1"/>
</dbReference>
<dbReference type="HAMAP" id="MF_00290">
    <property type="entry name" value="tRNA_dimethyltr_TRM1"/>
    <property type="match status" value="1"/>
</dbReference>
<dbReference type="InterPro" id="IPR029063">
    <property type="entry name" value="SAM-dependent_MTases_sf"/>
</dbReference>
<dbReference type="InterPro" id="IPR002905">
    <property type="entry name" value="Trm1"/>
</dbReference>
<dbReference type="InterPro" id="IPR022923">
    <property type="entry name" value="TRM1_arc_bac"/>
</dbReference>
<dbReference type="InterPro" id="IPR042296">
    <property type="entry name" value="tRNA_met_Trm1_C"/>
</dbReference>
<dbReference type="NCBIfam" id="TIGR00308">
    <property type="entry name" value="TRM1"/>
    <property type="match status" value="1"/>
</dbReference>
<dbReference type="PANTHER" id="PTHR10631">
    <property type="entry name" value="N 2 ,N 2 -DIMETHYLGUANOSINE TRNA METHYLTRANSFERASE"/>
    <property type="match status" value="1"/>
</dbReference>
<dbReference type="PANTHER" id="PTHR10631:SF3">
    <property type="entry name" value="TRNA (GUANINE(26)-N(2))-DIMETHYLTRANSFERASE"/>
    <property type="match status" value="1"/>
</dbReference>
<dbReference type="Pfam" id="PF02005">
    <property type="entry name" value="TRM"/>
    <property type="match status" value="1"/>
</dbReference>
<dbReference type="SUPFAM" id="SSF53335">
    <property type="entry name" value="S-adenosyl-L-methionine-dependent methyltransferases"/>
    <property type="match status" value="1"/>
</dbReference>
<dbReference type="PROSITE" id="PS51626">
    <property type="entry name" value="SAM_MT_TRM1"/>
    <property type="match status" value="1"/>
</dbReference>
<protein>
    <recommendedName>
        <fullName evidence="1">tRNA (guanine(26)-N(2))-dimethyltransferase</fullName>
        <ecNumber evidence="1">2.1.1.216</ecNumber>
    </recommendedName>
    <alternativeName>
        <fullName evidence="1">tRNA 2,2-dimethylguanosine-26 methyltransferase</fullName>
    </alternativeName>
    <alternativeName>
        <fullName evidence="1">tRNA(guanine-26,N(2)-N(2)) methyltransferase</fullName>
    </alternativeName>
    <alternativeName>
        <fullName evidence="1">tRNA(m(2,2)G26)dimethyltransferase</fullName>
    </alternativeName>
</protein>
<accession>Q8PU28</accession>
<sequence>MICRTIVEGTTKISVPVPPPDANFPPSAAPVFYNPEMELNRDINVAATAAFVERLLSKKDILREEIRYVDAFSASGIRGLRIAGEVGIHSTMNDWSHEAFELIKENIKINGLEEKAQATRRNANVLLHEQRFHIVDVDPFGTPSPYLDAAASSAYSMLSVTATDTAPLCGAHLNSGIRKYASVPLNTEYHSEMGLRVLLGACARELAKHEKGMLPLLSHVTRHYVRTYLEVLPGSRKADKTLKSMGFVAHCPRCGFRKPVYGLAVHIEKECPECGGLTKIAGPLWLGPYREPEFCNEVISELEAHPLNTKEKVRKIITFCRDELDIPMFYDQHVICKELGASATGIESLIEALRAGGFEASRTHFTGTSFKTDAPIAEIKKIILALSG</sequence>
<comment type="function">
    <text evidence="1">Dimethylates a single guanine residue at position 26 of a number of tRNAs using S-adenosyl-L-methionine as donor of the methyl groups.</text>
</comment>
<comment type="catalytic activity">
    <reaction evidence="1">
        <text>guanosine(26) in tRNA + 2 S-adenosyl-L-methionine = N(2)-dimethylguanosine(26) in tRNA + 2 S-adenosyl-L-homocysteine + 2 H(+)</text>
        <dbReference type="Rhea" id="RHEA:43140"/>
        <dbReference type="Rhea" id="RHEA-COMP:10359"/>
        <dbReference type="Rhea" id="RHEA-COMP:10360"/>
        <dbReference type="ChEBI" id="CHEBI:15378"/>
        <dbReference type="ChEBI" id="CHEBI:57856"/>
        <dbReference type="ChEBI" id="CHEBI:59789"/>
        <dbReference type="ChEBI" id="CHEBI:74269"/>
        <dbReference type="ChEBI" id="CHEBI:74513"/>
        <dbReference type="EC" id="2.1.1.216"/>
    </reaction>
</comment>
<comment type="similarity">
    <text evidence="1">Belongs to the class I-like SAM-binding methyltransferase superfamily. Trm1 family.</text>
</comment>
<evidence type="ECO:0000255" key="1">
    <source>
        <dbReference type="HAMAP-Rule" id="MF_00290"/>
    </source>
</evidence>
<feature type="chain" id="PRO_0000147684" description="tRNA (guanine(26)-N(2))-dimethyltransferase">
    <location>
        <begin position="1"/>
        <end position="388"/>
    </location>
</feature>
<feature type="domain" description="Trm1 methyltransferase" evidence="1">
    <location>
        <begin position="4"/>
        <end position="383"/>
    </location>
</feature>
<feature type="binding site" evidence="1">
    <location>
        <position position="41"/>
    </location>
    <ligand>
        <name>S-adenosyl-L-methionine</name>
        <dbReference type="ChEBI" id="CHEBI:59789"/>
    </ligand>
</feature>
<feature type="binding site" evidence="1">
    <location>
        <position position="78"/>
    </location>
    <ligand>
        <name>S-adenosyl-L-methionine</name>
        <dbReference type="ChEBI" id="CHEBI:59789"/>
    </ligand>
</feature>
<feature type="binding site" evidence="1">
    <location>
        <position position="94"/>
    </location>
    <ligand>
        <name>S-adenosyl-L-methionine</name>
        <dbReference type="ChEBI" id="CHEBI:59789"/>
    </ligand>
</feature>
<feature type="binding site" evidence="1">
    <location>
        <position position="123"/>
    </location>
    <ligand>
        <name>S-adenosyl-L-methionine</name>
        <dbReference type="ChEBI" id="CHEBI:59789"/>
    </ligand>
</feature>
<feature type="binding site" evidence="1">
    <location>
        <position position="251"/>
    </location>
    <ligand>
        <name>Zn(2+)</name>
        <dbReference type="ChEBI" id="CHEBI:29105"/>
    </ligand>
</feature>
<feature type="binding site" evidence="1">
    <location>
        <position position="254"/>
    </location>
    <ligand>
        <name>Zn(2+)</name>
        <dbReference type="ChEBI" id="CHEBI:29105"/>
    </ligand>
</feature>
<feature type="binding site" evidence="1">
    <location>
        <position position="271"/>
    </location>
    <ligand>
        <name>Zn(2+)</name>
        <dbReference type="ChEBI" id="CHEBI:29105"/>
    </ligand>
</feature>
<feature type="binding site" evidence="1">
    <location>
        <position position="274"/>
    </location>
    <ligand>
        <name>Zn(2+)</name>
        <dbReference type="ChEBI" id="CHEBI:29105"/>
    </ligand>
</feature>
<organism>
    <name type="scientific">Methanosarcina mazei (strain ATCC BAA-159 / DSM 3647 / Goe1 / Go1 / JCM 11833 / OCM 88)</name>
    <name type="common">Methanosarcina frisia</name>
    <dbReference type="NCBI Taxonomy" id="192952"/>
    <lineage>
        <taxon>Archaea</taxon>
        <taxon>Methanobacteriati</taxon>
        <taxon>Methanobacteriota</taxon>
        <taxon>Stenosarchaea group</taxon>
        <taxon>Methanomicrobia</taxon>
        <taxon>Methanosarcinales</taxon>
        <taxon>Methanosarcinaceae</taxon>
        <taxon>Methanosarcina</taxon>
    </lineage>
</organism>
<proteinExistence type="inferred from homology"/>
<reference key="1">
    <citation type="journal article" date="2002" name="J. Mol. Microbiol. Biotechnol.">
        <title>The genome of Methanosarcina mazei: evidence for lateral gene transfer between Bacteria and Archaea.</title>
        <authorList>
            <person name="Deppenmeier U."/>
            <person name="Johann A."/>
            <person name="Hartsch T."/>
            <person name="Merkl R."/>
            <person name="Schmitz R.A."/>
            <person name="Martinez-Arias R."/>
            <person name="Henne A."/>
            <person name="Wiezer A."/>
            <person name="Baeumer S."/>
            <person name="Jacobi C."/>
            <person name="Brueggemann H."/>
            <person name="Lienard T."/>
            <person name="Christmann A."/>
            <person name="Boemecke M."/>
            <person name="Steckel S."/>
            <person name="Bhattacharyya A."/>
            <person name="Lykidis A."/>
            <person name="Overbeek R."/>
            <person name="Klenk H.-P."/>
            <person name="Gunsalus R.P."/>
            <person name="Fritz H.-J."/>
            <person name="Gottschalk G."/>
        </authorList>
    </citation>
    <scope>NUCLEOTIDE SEQUENCE [LARGE SCALE GENOMIC DNA]</scope>
    <source>
        <strain>ATCC BAA-159 / DSM 3647 / Goe1 / Go1 / JCM 11833 / OCM 88</strain>
    </source>
</reference>
<keyword id="KW-0479">Metal-binding</keyword>
<keyword id="KW-0489">Methyltransferase</keyword>
<keyword id="KW-0694">RNA-binding</keyword>
<keyword id="KW-0949">S-adenosyl-L-methionine</keyword>
<keyword id="KW-0808">Transferase</keyword>
<keyword id="KW-0819">tRNA processing</keyword>
<keyword id="KW-0820">tRNA-binding</keyword>
<keyword id="KW-0862">Zinc</keyword>
<gene>
    <name evidence="1" type="primary">trm1</name>
    <name type="ordered locus">MM_2528</name>
</gene>
<name>TRM1_METMA</name>